<accession>F4J061</accession>
<accession>A0A178VHN2</accession>
<accession>Q9LIE3</accession>
<name>IQD5_ARATH</name>
<keyword id="KW-0112">Calmodulin-binding</keyword>
<keyword id="KW-0963">Cytoplasm</keyword>
<keyword id="KW-0206">Cytoskeleton</keyword>
<keyword id="KW-0539">Nucleus</keyword>
<keyword id="KW-1185">Reference proteome</keyword>
<keyword id="KW-0677">Repeat</keyword>
<organism>
    <name type="scientific">Arabidopsis thaliana</name>
    <name type="common">Mouse-ear cress</name>
    <dbReference type="NCBI Taxonomy" id="3702"/>
    <lineage>
        <taxon>Eukaryota</taxon>
        <taxon>Viridiplantae</taxon>
        <taxon>Streptophyta</taxon>
        <taxon>Embryophyta</taxon>
        <taxon>Tracheophyta</taxon>
        <taxon>Spermatophyta</taxon>
        <taxon>Magnoliopsida</taxon>
        <taxon>eudicotyledons</taxon>
        <taxon>Gunneridae</taxon>
        <taxon>Pentapetalae</taxon>
        <taxon>rosids</taxon>
        <taxon>malvids</taxon>
        <taxon>Brassicales</taxon>
        <taxon>Brassicaceae</taxon>
        <taxon>Camelineae</taxon>
        <taxon>Arabidopsis</taxon>
    </lineage>
</organism>
<feature type="chain" id="PRO_0000453112" description="Protein IQ-DOMAIN 5">
    <location>
        <begin position="1"/>
        <end position="422"/>
    </location>
</feature>
<feature type="domain" description="IQ 1" evidence="2">
    <location>
        <begin position="87"/>
        <end position="115"/>
    </location>
</feature>
<feature type="domain" description="IQ 2" evidence="2">
    <location>
        <begin position="116"/>
        <end position="138"/>
    </location>
</feature>
<feature type="domain" description="IQ 3" evidence="2">
    <location>
        <begin position="139"/>
        <end position="164"/>
    </location>
</feature>
<feature type="region of interest" description="Calmodulin-binding" evidence="8">
    <location>
        <begin position="137"/>
        <end position="151"/>
    </location>
</feature>
<feature type="region of interest" description="Disordered" evidence="4">
    <location>
        <begin position="269"/>
        <end position="422"/>
    </location>
</feature>
<feature type="short sequence motif" description="Nuclear localization signal" evidence="3">
    <location>
        <begin position="23"/>
        <end position="30"/>
    </location>
</feature>
<feature type="compositionally biased region" description="Polar residues" evidence="4">
    <location>
        <begin position="273"/>
        <end position="308"/>
    </location>
</feature>
<feature type="compositionally biased region" description="Low complexity" evidence="4">
    <location>
        <begin position="310"/>
        <end position="327"/>
    </location>
</feature>
<feature type="compositionally biased region" description="Basic and acidic residues" evidence="4">
    <location>
        <begin position="355"/>
        <end position="371"/>
    </location>
</feature>
<feature type="compositionally biased region" description="Polar residues" evidence="4">
    <location>
        <begin position="373"/>
        <end position="387"/>
    </location>
</feature>
<feature type="compositionally biased region" description="Basic and acidic residues" evidence="4">
    <location>
        <begin position="412"/>
        <end position="422"/>
    </location>
</feature>
<proteinExistence type="evidence at protein level"/>
<sequence length="422" mass="46899">MGASGRWIKALVGFTKSDKSRSSKKDENVKVATKSRFGRKNSVDFDFEKFQDGFEDSNTRSMVDTGVSTSTSLQSYGGVAYDEQSRENRAATRIQTAYRGFLARRALRALKGLVRLQALVRGHAVRKQAAVTLRCMQALVRVQARVRARRVRLALELESETSQQTLQQQLADEARVREIEEGWCDSIGSVEQIQAKLLKRQEAAAKRERAMAYALTHQWQAGTRLLSAHSGFQPDKNNWGWNWLERWMAVRPWENRFLDSNLRDDAKLGENGMEQSENVPKTQIKSVSKMPNTSNLVSGVSSQMTGPCQSDGDSSSPGISSSIPVVSKAKSKPAKDDLAVEVNSRPGAGPRSHSNPKERSREPNRSSKERLSLPNSGKSLGSQSTKANRAGKLTPASQKVVEEKSAQNQRRRNSDPIKQRLA</sequence>
<comment type="function">
    <text evidence="1 6 7">May be involved in cooperative interactions with calmodulins or calmodulin-like proteins (By similarity). Recruits calmodulin (CaM) calcium sensor proteins to cortical microtubule arrays, thus being a potential scaffold in cellular signaling and trafficking (PubMed:29976837, PubMed:30407556). Binds to microtubules (MTs) and promotes MT assembly and dynamics to modulate pavement cell (PC) morphogenesis via cellulose deposition-dependent anisotropic cell expansion triggered by cellulose synthase complexes (CSCs) (PubMed:29976837, PubMed:30407556). May associate with nucleic acids and regulate gene expression at the transcriptional or post-transcriptional level (By similarity).</text>
</comment>
<comment type="subunit">
    <text evidence="6 7">Binds to multiple calmodulin (CaM) in the presence of Ca(2+) and CaM-like proteins.</text>
</comment>
<comment type="subcellular location">
    <subcellularLocation>
        <location evidence="3">Nucleus</location>
    </subcellularLocation>
    <subcellularLocation>
        <location evidence="5 6 7">Cytoplasm</location>
        <location evidence="5 6 7">Cytoskeleton</location>
    </subcellularLocation>
    <subcellularLocation>
        <location evidence="6">Cytoplasm</location>
        <location evidence="6">Cytoskeleton</location>
        <location evidence="6">Spindle</location>
    </subcellularLocation>
    <subcellularLocation>
        <location evidence="6">Cytoplasm</location>
        <location evidence="6">Cytoskeleton</location>
        <location evidence="6">Phragmoplast</location>
    </subcellularLocation>
    <text evidence="6 7">Localized to microtubules (MTs) arrays in dynamic pattern, including cortical MT in leaf pavement and hypocotyl epidermal cells (in a discontinuous and punctate manner corresponding to indentation regions), as well as preprophase bands, mitotic spindles, and phragmoplasts of mitotic cells in root tips.</text>
</comment>
<comment type="tissue specificity">
    <text evidence="7">Expressed mostly in vegetative tissues including older parts of the root, cotyledons, leaves and shoot apical meristems (SAM) (PubMed:30407556). Present at low levels in pollen, siliques and seeds (PubMed:30407556).</text>
</comment>
<comment type="developmental stage">
    <text evidence="7">In leaves and hypocotyls, mostly observed in vascular tissues (PubMed:30407556). In root tips, restricted to the lateral root cap of primary and lateral root meristems (PubMed:30407556).</text>
</comment>
<comment type="disruption phenotype">
    <text evidence="6 7">Abnormal pavement cell morphogenesis in cotyledons characterized by reduced interdigitation associated with altered microtubules organization and dynamics and reduced rates of cellulose deposition in anticlinal cell walls thus correleted with a reduced anisotropic cell expansion (PubMed:29976837, PubMed:30407556). Hypersensitivity to the microtubule-disrupting drug oryzalin (PubMed:29976837).</text>
</comment>
<comment type="similarity">
    <text evidence="9">Belongs to the IQD family.</text>
</comment>
<comment type="sequence caution" evidence="9">
    <conflict type="erroneous gene model prediction">
        <sequence resource="EMBL-CDS" id="BAB03067"/>
    </conflict>
</comment>
<reference key="1">
    <citation type="journal article" date="2000" name="DNA Res.">
        <title>Structural analysis of Arabidopsis thaliana chromosome 3. II. Sequence features of the 4,251,695 bp regions covered by 90 P1, TAC and BAC clones.</title>
        <authorList>
            <person name="Kaneko T."/>
            <person name="Katoh T."/>
            <person name="Sato S."/>
            <person name="Nakamura Y."/>
            <person name="Asamizu E."/>
            <person name="Tabata S."/>
        </authorList>
    </citation>
    <scope>NUCLEOTIDE SEQUENCE [LARGE SCALE GENOMIC DNA]</scope>
    <source>
        <strain>cv. Columbia</strain>
    </source>
</reference>
<reference key="2">
    <citation type="journal article" date="2017" name="Plant J.">
        <title>Araport11: a complete reannotation of the Arabidopsis thaliana reference genome.</title>
        <authorList>
            <person name="Cheng C.Y."/>
            <person name="Krishnakumar V."/>
            <person name="Chan A.P."/>
            <person name="Thibaud-Nissen F."/>
            <person name="Schobel S."/>
            <person name="Town C.D."/>
        </authorList>
    </citation>
    <scope>GENOME REANNOTATION</scope>
    <source>
        <strain>cv. Columbia</strain>
    </source>
</reference>
<reference key="3">
    <citation type="journal article" date="2005" name="BMC Evol. Biol.">
        <title>Genome-wide comparative analysis of the IQD gene families in Arabidopsis thaliana and Oryza sativa.</title>
        <authorList>
            <person name="Abel S."/>
            <person name="Savchenko T."/>
            <person name="Levy M."/>
        </authorList>
    </citation>
    <scope>INTERACTION WITH CALMODULIN</scope>
    <scope>GENE FAMILY</scope>
    <scope>NOMENCLATURE</scope>
    <source>
        <strain>cv. Columbia</strain>
    </source>
</reference>
<reference key="4">
    <citation type="journal article" date="2005" name="Plant J.">
        <title>Arabidopsis IQD1, a novel calmodulin-binding nuclear protein, stimulates glucosinolate accumulation and plant defense.</title>
        <authorList>
            <person name="Levy M."/>
            <person name="Wang Q."/>
            <person name="Kaspi R."/>
            <person name="Parrella M.P."/>
            <person name="Abel S."/>
        </authorList>
    </citation>
    <scope>GENE FAMILY</scope>
</reference>
<reference key="5">
    <citation type="journal article" date="2009" name="J. Proteomics">
        <title>Phosphoproteomic analysis of nuclei-enriched fractions from Arabidopsis thaliana.</title>
        <authorList>
            <person name="Jones A.M.E."/>
            <person name="MacLean D."/>
            <person name="Studholme D.J."/>
            <person name="Serna-Sanz A."/>
            <person name="Andreasson E."/>
            <person name="Rathjen J.P."/>
            <person name="Peck S.C."/>
        </authorList>
    </citation>
    <scope>IDENTIFICATION BY MASS SPECTROMETRY [LARGE SCALE ANALYSIS]</scope>
</reference>
<reference key="6">
    <citation type="journal article" date="2009" name="Plant Physiol.">
        <title>Large-scale Arabidopsis phosphoproteome profiling reveals novel chloroplast kinase substrates and phosphorylation networks.</title>
        <authorList>
            <person name="Reiland S."/>
            <person name="Messerli G."/>
            <person name="Baerenfaller K."/>
            <person name="Gerrits B."/>
            <person name="Endler A."/>
            <person name="Grossmann J."/>
            <person name="Gruissem W."/>
            <person name="Baginsky S."/>
        </authorList>
    </citation>
    <scope>IDENTIFICATION BY MASS SPECTROMETRY [LARGE SCALE ANALYSIS]</scope>
</reference>
<reference key="7">
    <citation type="journal article" date="2017" name="Plant Physiol.">
        <title>The IQD family of calmodulin-binding proteins links calcium signaling to microtubules, membrane subdomains, and the nucleus.</title>
        <authorList>
            <person name="Buerstenbinder K."/>
            <person name="Moeller B."/>
            <person name="Ploetner R."/>
            <person name="Stamm G."/>
            <person name="Hause G."/>
            <person name="Mitra D."/>
            <person name="Abel S."/>
        </authorList>
    </citation>
    <scope>SUBCELLULAR LOCATION</scope>
    <source>
        <strain>cv. Columbia</strain>
    </source>
</reference>
<reference key="8">
    <citation type="journal article" date="2017" name="Plant Signal. Behav.">
        <title>Functions of IQD proteins as hubs in cellular calcium and auxin signaling: A toolbox for shape formation and tissue-specification in plants?</title>
        <authorList>
            <person name="Buerstenbinder K."/>
            <person name="Mitra D."/>
            <person name="Quegwer J."/>
        </authorList>
    </citation>
    <scope>REVIEW</scope>
</reference>
<reference key="9">
    <citation type="journal article" date="2018" name="Plant Physiol.">
        <title>The microtubule-associated protein IQ67 DOMAIN5 modulates microtubule dynamics and pavement cell shape.</title>
        <authorList>
            <person name="Liang H."/>
            <person name="Zhang Y."/>
            <person name="Martinez P."/>
            <person name="Rasmussen C.G."/>
            <person name="Xu T."/>
            <person name="Yang Z."/>
        </authorList>
    </citation>
    <scope>FUNCTION</scope>
    <scope>DISRUPTION PHENOTYPE</scope>
    <scope>SUBCELLULAR LOCATION</scope>
    <scope>SUBUNIT</scope>
    <source>
        <strain>cv. Columbia</strain>
    </source>
</reference>
<reference key="10">
    <citation type="journal article" date="2019" name="J. Exp. Bot.">
        <title>Microtubule-associated protein IQ67 DOMAIN5 regulates morphogenesis of leaf pavement cells in Arabidopsis thaliana.</title>
        <authorList>
            <person name="Mitra D."/>
            <person name="Klemm S."/>
            <person name="Kumari P."/>
            <person name="Quegwer J."/>
            <person name="Moeller B."/>
            <person name="Poeschl Y."/>
            <person name="Pflug P."/>
            <person name="Stamm G."/>
            <person name="Abel S."/>
            <person name="Buerstenbinder K."/>
        </authorList>
    </citation>
    <scope>FUNCTION</scope>
    <scope>DISRUPTION PHENOTYPE</scope>
    <scope>TISSUE SPECIFICITY</scope>
    <scope>DEVELOPMENTAL STAGE</scope>
    <scope>SUBCELLULAR LOCATION</scope>
    <scope>SUBUNIT</scope>
    <source>
        <strain>cv. Columbia</strain>
    </source>
</reference>
<gene>
    <name evidence="8" type="primary">IQD5</name>
    <name evidence="10" type="ordered locus">At3g22190</name>
    <name evidence="11" type="ORF">MKA23.10</name>
</gene>
<evidence type="ECO:0000250" key="1">
    <source>
        <dbReference type="UniProtKB" id="Q9SF32"/>
    </source>
</evidence>
<evidence type="ECO:0000255" key="2">
    <source>
        <dbReference type="PROSITE-ProRule" id="PRU00116"/>
    </source>
</evidence>
<evidence type="ECO:0000255" key="3">
    <source>
        <dbReference type="PROSITE-ProRule" id="PRU00768"/>
    </source>
</evidence>
<evidence type="ECO:0000256" key="4">
    <source>
        <dbReference type="SAM" id="MobiDB-lite"/>
    </source>
</evidence>
<evidence type="ECO:0000269" key="5">
    <source>
    </source>
</evidence>
<evidence type="ECO:0000269" key="6">
    <source>
    </source>
</evidence>
<evidence type="ECO:0000269" key="7">
    <source>
    </source>
</evidence>
<evidence type="ECO:0000303" key="8">
    <source>
    </source>
</evidence>
<evidence type="ECO:0000305" key="9"/>
<evidence type="ECO:0000312" key="10">
    <source>
        <dbReference type="Araport" id="AT3G22190"/>
    </source>
</evidence>
<evidence type="ECO:0000312" key="11">
    <source>
        <dbReference type="EMBL" id="BAB03067.1"/>
    </source>
</evidence>
<protein>
    <recommendedName>
        <fullName evidence="8">Protein IQ-DOMAIN 5</fullName>
        <shortName evidence="8">AtIQD5</shortName>
    </recommendedName>
</protein>
<dbReference type="EMBL" id="AP001306">
    <property type="protein sequence ID" value="BAB03067.1"/>
    <property type="status" value="ALT_SEQ"/>
    <property type="molecule type" value="Genomic_DNA"/>
</dbReference>
<dbReference type="EMBL" id="CP002686">
    <property type="protein sequence ID" value="AEE76599.1"/>
    <property type="molecule type" value="Genomic_DNA"/>
</dbReference>
<dbReference type="EMBL" id="CP002686">
    <property type="protein sequence ID" value="AEE76600.1"/>
    <property type="molecule type" value="Genomic_DNA"/>
</dbReference>
<dbReference type="EMBL" id="CP002686">
    <property type="protein sequence ID" value="ANM63858.1"/>
    <property type="molecule type" value="Genomic_DNA"/>
</dbReference>
<dbReference type="EMBL" id="CP002686">
    <property type="protein sequence ID" value="ANM63859.1"/>
    <property type="molecule type" value="Genomic_DNA"/>
</dbReference>
<dbReference type="RefSeq" id="NP_001189946.1">
    <property type="nucleotide sequence ID" value="NM_001203017.2"/>
</dbReference>
<dbReference type="RefSeq" id="NP_001319617.1">
    <property type="nucleotide sequence ID" value="NM_001338571.1"/>
</dbReference>
<dbReference type="RefSeq" id="NP_001325926.1">
    <property type="nucleotide sequence ID" value="NM_001338572.1"/>
</dbReference>
<dbReference type="RefSeq" id="NP_188858.4">
    <property type="nucleotide sequence ID" value="NM_113116.4"/>
</dbReference>
<dbReference type="SMR" id="F4J061"/>
<dbReference type="FunCoup" id="F4J061">
    <property type="interactions" value="1461"/>
</dbReference>
<dbReference type="STRING" id="3702.F4J061"/>
<dbReference type="iPTMnet" id="F4J061"/>
<dbReference type="PaxDb" id="3702-AT3G22190.2"/>
<dbReference type="ProteomicsDB" id="191482"/>
<dbReference type="EnsemblPlants" id="AT3G22190.1">
    <property type="protein sequence ID" value="AT3G22190.1"/>
    <property type="gene ID" value="AT3G22190"/>
</dbReference>
<dbReference type="EnsemblPlants" id="AT3G22190.2">
    <property type="protein sequence ID" value="AT3G22190.2"/>
    <property type="gene ID" value="AT3G22190"/>
</dbReference>
<dbReference type="EnsemblPlants" id="AT3G22190.3">
    <property type="protein sequence ID" value="AT3G22190.3"/>
    <property type="gene ID" value="AT3G22190"/>
</dbReference>
<dbReference type="EnsemblPlants" id="AT3G22190.4">
    <property type="protein sequence ID" value="AT3G22190.4"/>
    <property type="gene ID" value="AT3G22190"/>
</dbReference>
<dbReference type="GeneID" id="821783"/>
<dbReference type="Gramene" id="AT3G22190.1">
    <property type="protein sequence ID" value="AT3G22190.1"/>
    <property type="gene ID" value="AT3G22190"/>
</dbReference>
<dbReference type="Gramene" id="AT3G22190.2">
    <property type="protein sequence ID" value="AT3G22190.2"/>
    <property type="gene ID" value="AT3G22190"/>
</dbReference>
<dbReference type="Gramene" id="AT3G22190.3">
    <property type="protein sequence ID" value="AT3G22190.3"/>
    <property type="gene ID" value="AT3G22190"/>
</dbReference>
<dbReference type="Gramene" id="AT3G22190.4">
    <property type="protein sequence ID" value="AT3G22190.4"/>
    <property type="gene ID" value="AT3G22190"/>
</dbReference>
<dbReference type="KEGG" id="ath:AT3G22190"/>
<dbReference type="Araport" id="AT3G22190"/>
<dbReference type="TAIR" id="AT3G22190">
    <property type="gene designation" value="IQD5"/>
</dbReference>
<dbReference type="eggNOG" id="ENOG502QT9B">
    <property type="taxonomic scope" value="Eukaryota"/>
</dbReference>
<dbReference type="HOGENOM" id="CLU_037259_1_1_1"/>
<dbReference type="InParanoid" id="F4J061"/>
<dbReference type="OMA" id="MEQTESV"/>
<dbReference type="OrthoDB" id="654277at2759"/>
<dbReference type="PRO" id="PR:F4J061"/>
<dbReference type="Proteomes" id="UP000006548">
    <property type="component" value="Chromosome 3"/>
</dbReference>
<dbReference type="ExpressionAtlas" id="F4J061">
    <property type="expression patterns" value="baseline and differential"/>
</dbReference>
<dbReference type="GO" id="GO:0055028">
    <property type="term" value="C:cortical microtubule"/>
    <property type="evidence" value="ECO:0000314"/>
    <property type="project" value="UniProtKB"/>
</dbReference>
<dbReference type="GO" id="GO:0016020">
    <property type="term" value="C:membrane"/>
    <property type="evidence" value="ECO:0000314"/>
    <property type="project" value="TAIR"/>
</dbReference>
<dbReference type="GO" id="GO:0005635">
    <property type="term" value="C:nuclear envelope"/>
    <property type="evidence" value="ECO:0000314"/>
    <property type="project" value="TAIR"/>
</dbReference>
<dbReference type="GO" id="GO:0009524">
    <property type="term" value="C:phragmoplast"/>
    <property type="evidence" value="ECO:0000314"/>
    <property type="project" value="UniProtKB"/>
</dbReference>
<dbReference type="GO" id="GO:0005886">
    <property type="term" value="C:plasma membrane"/>
    <property type="evidence" value="ECO:0007005"/>
    <property type="project" value="TAIR"/>
</dbReference>
<dbReference type="GO" id="GO:0009574">
    <property type="term" value="C:preprophase band"/>
    <property type="evidence" value="ECO:0000314"/>
    <property type="project" value="UniProtKB"/>
</dbReference>
<dbReference type="GO" id="GO:0005876">
    <property type="term" value="C:spindle microtubule"/>
    <property type="evidence" value="ECO:0000314"/>
    <property type="project" value="UniProtKB"/>
</dbReference>
<dbReference type="GO" id="GO:0005516">
    <property type="term" value="F:calmodulin binding"/>
    <property type="evidence" value="ECO:0000314"/>
    <property type="project" value="UniProtKB"/>
</dbReference>
<dbReference type="GO" id="GO:0051211">
    <property type="term" value="P:anisotropic cell growth"/>
    <property type="evidence" value="ECO:0000315"/>
    <property type="project" value="UniProtKB"/>
</dbReference>
<dbReference type="GO" id="GO:0035556">
    <property type="term" value="P:intracellular signal transduction"/>
    <property type="evidence" value="ECO:0000315"/>
    <property type="project" value="UniProtKB"/>
</dbReference>
<dbReference type="GO" id="GO:0090436">
    <property type="term" value="P:leaf pavement cell development"/>
    <property type="evidence" value="ECO:0000315"/>
    <property type="project" value="UniProtKB"/>
</dbReference>
<dbReference type="GO" id="GO:0007017">
    <property type="term" value="P:microtubule-based process"/>
    <property type="evidence" value="ECO:0000315"/>
    <property type="project" value="UniProtKB"/>
</dbReference>
<dbReference type="GO" id="GO:0072699">
    <property type="term" value="P:protein localization to cortical microtubule cytoskeleton"/>
    <property type="evidence" value="ECO:0000315"/>
    <property type="project" value="UniProtKB"/>
</dbReference>
<dbReference type="GO" id="GO:2001006">
    <property type="term" value="P:regulation of cellulose biosynthetic process"/>
    <property type="evidence" value="ECO:0000315"/>
    <property type="project" value="UniProtKB"/>
</dbReference>
<dbReference type="GO" id="GO:0070507">
    <property type="term" value="P:regulation of microtubule cytoskeleton organization"/>
    <property type="evidence" value="ECO:0000315"/>
    <property type="project" value="UniProtKB"/>
</dbReference>
<dbReference type="CDD" id="cd23767">
    <property type="entry name" value="IQCD"/>
    <property type="match status" value="1"/>
</dbReference>
<dbReference type="Gene3D" id="1.20.5.190">
    <property type="match status" value="1"/>
</dbReference>
<dbReference type="InterPro" id="IPR000048">
    <property type="entry name" value="IQ_motif_EF-hand-BS"/>
</dbReference>
<dbReference type="PANTHER" id="PTHR32295">
    <property type="entry name" value="IQ-DOMAIN 5-RELATED"/>
    <property type="match status" value="1"/>
</dbReference>
<dbReference type="PANTHER" id="PTHR32295:SF123">
    <property type="entry name" value="PROTEIN IQ-DOMAIN 5"/>
    <property type="match status" value="1"/>
</dbReference>
<dbReference type="Pfam" id="PF00612">
    <property type="entry name" value="IQ"/>
    <property type="match status" value="1"/>
</dbReference>
<dbReference type="SMART" id="SM00015">
    <property type="entry name" value="IQ"/>
    <property type="match status" value="2"/>
</dbReference>
<dbReference type="PROSITE" id="PS50096">
    <property type="entry name" value="IQ"/>
    <property type="match status" value="2"/>
</dbReference>